<organism>
    <name type="scientific">Mycobacterium tuberculosis (strain ATCC 25618 / H37Rv)</name>
    <dbReference type="NCBI Taxonomy" id="83332"/>
    <lineage>
        <taxon>Bacteria</taxon>
        <taxon>Bacillati</taxon>
        <taxon>Actinomycetota</taxon>
        <taxon>Actinomycetes</taxon>
        <taxon>Mycobacteriales</taxon>
        <taxon>Mycobacteriaceae</taxon>
        <taxon>Mycobacterium</taxon>
        <taxon>Mycobacterium tuberculosis complex</taxon>
    </lineage>
</organism>
<comment type="function">
    <text evidence="5 7 8 9 10 12 15">Protein kinase that regulates many aspects of mycobacterial physiology, and is critical for growth in vitro and survival of the pathogen in the host (PubMed:25713147). Is a key component of a signal transduction pathway that regulates cell growth, cell shape and cell division via phosphorylation of target proteins such as FtsZ, Wag31, GlmU, PstP, EmbR and Rv1422 (PubMed:15985609, PubMed:16817899, PubMed:19121323, PubMed:21190553, PubMed:21423706). Also catalyzes the phosphorylation of the proteasome alpha-subunit (PrcA) and unprocessed proteasome beta-subunit (pre-PrcB), which results in the inhibition of processing of pre-PrcB and assembly of the proteasome complex, and thereby enhances the mycobacterial resistance to H(2)O(2); PknA thus plays an important role in the oxidative stress response by impeding the formation of holo-proteasome in M.tuberculosis under H(2)O(2) stress (PubMed:25224505). Shows a strong preference for Thr versus Ser as the phosphoacceptor.</text>
</comment>
<comment type="catalytic activity">
    <reaction evidence="5">
        <text>L-seryl-[protein] + ATP = O-phospho-L-seryl-[protein] + ADP + H(+)</text>
        <dbReference type="Rhea" id="RHEA:17989"/>
        <dbReference type="Rhea" id="RHEA-COMP:9863"/>
        <dbReference type="Rhea" id="RHEA-COMP:11604"/>
        <dbReference type="ChEBI" id="CHEBI:15378"/>
        <dbReference type="ChEBI" id="CHEBI:29999"/>
        <dbReference type="ChEBI" id="CHEBI:30616"/>
        <dbReference type="ChEBI" id="CHEBI:83421"/>
        <dbReference type="ChEBI" id="CHEBI:456216"/>
        <dbReference type="EC" id="2.7.11.1"/>
    </reaction>
</comment>
<comment type="catalytic activity">
    <reaction evidence="5">
        <text>L-threonyl-[protein] + ATP = O-phospho-L-threonyl-[protein] + ADP + H(+)</text>
        <dbReference type="Rhea" id="RHEA:46608"/>
        <dbReference type="Rhea" id="RHEA-COMP:11060"/>
        <dbReference type="Rhea" id="RHEA-COMP:11605"/>
        <dbReference type="ChEBI" id="CHEBI:15378"/>
        <dbReference type="ChEBI" id="CHEBI:30013"/>
        <dbReference type="ChEBI" id="CHEBI:30616"/>
        <dbReference type="ChEBI" id="CHEBI:61977"/>
        <dbReference type="ChEBI" id="CHEBI:456216"/>
        <dbReference type="EC" id="2.7.11.1"/>
    </reaction>
</comment>
<comment type="activity regulation">
    <text evidence="14">Is activated by autophosphorylation of activation loop threonine residues, which results in conformational change and allows substrate binding. It seems that following ATP binding, phosphate is first transferred to Thr-180 via a cis mechanism to activate the kinase activity; phosphorylation of Thr-180 triggers PknA to phosphorylate Thr-172/Thr-174 via a trans mechanism. Phosphorylation of all of the activation loop threonines is necessary for efficient catalytic activity.</text>
</comment>
<comment type="subcellular location">
    <subcellularLocation>
        <location evidence="11">Cell membrane</location>
        <topology evidence="11">Single-pass membrane protein</topology>
    </subcellularLocation>
    <text evidence="15">The majority of the cells displays PknA expression at the membrane perimeter along the length of the cell, whereas a minor population shows PknA to localize at either or both poles (uni- and bipolar; 16 and 14%, respectively) and occasionally to both the poles and the midcell (12%).</text>
</comment>
<comment type="induction">
    <text evidence="5">Expressed predominantly in exponential phase.</text>
</comment>
<comment type="domain">
    <text evidence="14 15">The extracellular domain is dispensable for cell growth and survival in vitro (PubMed:25713147). The catalytic activity of PknA is confined within the N-terminal 283 amino acids (PubMed:25665034).</text>
</comment>
<comment type="PTM">
    <text evidence="6 7 12 13 14 15">Autophosphorylated (PubMed:16739134, PubMed:25586004, PubMed:25665034). Phosphorylation of Thr-180 in the activation loop is critical for the functionality of PknA (PubMed:25665034). Autophosphorylation level increases in the presence of H(2)O(2) suggesting that PknA is activated by H(2)O(2) (PubMed:25224505). Phosphorylation of the activation loop at Thr-172 of PknA is critical for bacterial growth; PknA autophosphorylates its activation loop independent of PknB (PubMed:25713147). Dephosphorylated by PstP (PubMed:16817899).</text>
</comment>
<comment type="disruption phenotype">
    <text evidence="15">PknA depletion in M.tuberculosis results in cell death and aberrant cell morphology, and leads to complete clearance of the pathogen from the host tissues using the murine infection model.</text>
</comment>
<comment type="miscellaneous">
    <text evidence="16">Overexpression causes major growth and morphological changes that indicate defects in cell wall synthesis and possibly in cell division.</text>
</comment>
<comment type="similarity">
    <text evidence="2">Belongs to the protein kinase superfamily. Ser/Thr protein kinase family.</text>
</comment>
<comment type="caution">
    <text evidence="18">The article by Sureka et al was retracted by the editors after publication. Concerns were raised regarding the results presented in multiple figure panels. The raw data or replacement panels that were available did not satisfactorily address all the issues, thus questioning the integrity of the data.</text>
</comment>
<keyword id="KW-0002">3D-structure</keyword>
<keyword id="KW-0067">ATP-binding</keyword>
<keyword id="KW-1003">Cell membrane</keyword>
<keyword id="KW-0418">Kinase</keyword>
<keyword id="KW-0472">Membrane</keyword>
<keyword id="KW-0547">Nucleotide-binding</keyword>
<keyword id="KW-0597">Phosphoprotein</keyword>
<keyword id="KW-1185">Reference proteome</keyword>
<keyword id="KW-0723">Serine/threonine-protein kinase</keyword>
<keyword id="KW-0808">Transferase</keyword>
<keyword id="KW-0812">Transmembrane</keyword>
<keyword id="KW-1133">Transmembrane helix</keyword>
<keyword id="KW-0843">Virulence</keyword>
<name>PKNA_MYCTU</name>
<gene>
    <name type="primary">pknA</name>
    <name type="ordered locus">Rv0015c</name>
    <name type="ORF">MTCY10H4.15c</name>
</gene>
<reference key="1">
    <citation type="journal article" date="1998" name="Nature">
        <title>Deciphering the biology of Mycobacterium tuberculosis from the complete genome sequence.</title>
        <authorList>
            <person name="Cole S.T."/>
            <person name="Brosch R."/>
            <person name="Parkhill J."/>
            <person name="Garnier T."/>
            <person name="Churcher C.M."/>
            <person name="Harris D.E."/>
            <person name="Gordon S.V."/>
            <person name="Eiglmeier K."/>
            <person name="Gas S."/>
            <person name="Barry C.E. III"/>
            <person name="Tekaia F."/>
            <person name="Badcock K."/>
            <person name="Basham D."/>
            <person name="Brown D."/>
            <person name="Chillingworth T."/>
            <person name="Connor R."/>
            <person name="Davies R.M."/>
            <person name="Devlin K."/>
            <person name="Feltwell T."/>
            <person name="Gentles S."/>
            <person name="Hamlin N."/>
            <person name="Holroyd S."/>
            <person name="Hornsby T."/>
            <person name="Jagels K."/>
            <person name="Krogh A."/>
            <person name="McLean J."/>
            <person name="Moule S."/>
            <person name="Murphy L.D."/>
            <person name="Oliver S."/>
            <person name="Osborne J."/>
            <person name="Quail M.A."/>
            <person name="Rajandream M.A."/>
            <person name="Rogers J."/>
            <person name="Rutter S."/>
            <person name="Seeger K."/>
            <person name="Skelton S."/>
            <person name="Squares S."/>
            <person name="Squares R."/>
            <person name="Sulston J.E."/>
            <person name="Taylor K."/>
            <person name="Whitehead S."/>
            <person name="Barrell B.G."/>
        </authorList>
    </citation>
    <scope>NUCLEOTIDE SEQUENCE [LARGE SCALE GENOMIC DNA]</scope>
    <source>
        <strain>ATCC 25618 / H37Rv</strain>
    </source>
</reference>
<reference key="2">
    <citation type="journal article" date="2005" name="Genes Dev.">
        <title>The Mycobacterium tuberculosis serine/threonine kinases PknA and PknB: substrate identification and regulation of cell shape.</title>
        <authorList>
            <person name="Kang C.M."/>
            <person name="Abbott D.W."/>
            <person name="Park S.T."/>
            <person name="Dascher C.C."/>
            <person name="Cantley L.C."/>
            <person name="Husson R.N."/>
        </authorList>
    </citation>
    <scope>FUNCTION</scope>
    <scope>CATALYTIC ACTIVITY</scope>
    <scope>INDUCTION</scope>
    <scope>AUTOPHOSPHORYLATION</scope>
    <scope>OVEREXPRESSION</scope>
    <scope>MUTAGENESIS OF LYS-42</scope>
    <source>
        <strain>ATCC 25618 / H37Rv</strain>
    </source>
</reference>
<reference key="3">
    <citation type="journal article" date="2006" name="FEBS J.">
        <title>EmbR, a regulatory protein with ATPase activity, is a substrate of multiple serine/threonine kinases and phosphatase in Mycobacterium tuberculosis.</title>
        <authorList>
            <person name="Sharma K."/>
            <person name="Gupta M."/>
            <person name="Krupa A."/>
            <person name="Srinivasan N."/>
            <person name="Singh Y."/>
        </authorList>
    </citation>
    <scope>FUNCTION AS A KINASE WITH EMBR AS SUBSTRATE</scope>
    <scope>DEPHOSPHORYLATION BY PSTP</scope>
</reference>
<reference key="4">
    <citation type="journal article" date="2006" name="Proteomics">
        <title>Characterization of the phosphorylation sites of Mycobacterium tuberculosis serine/threonine protein kinases, PknA, PknD, PknE, and PknH by mass spectrometry.</title>
        <authorList>
            <person name="Molle V."/>
            <person name="Zanella-Cleon I."/>
            <person name="Robin J.P."/>
            <person name="Mallejac S."/>
            <person name="Cozzone A.J."/>
            <person name="Becchi M."/>
        </authorList>
    </citation>
    <scope>AUTOPHOSPHORYLATION</scope>
    <scope>IDENTIFICATION BY MASS SPECTROMETRY</scope>
    <source>
        <strain>ATCC 25618 / H37Rv</strain>
    </source>
</reference>
<reference key="5">
    <citation type="journal article" date="2009" name="J. Mol. Biol.">
        <title>PknB-mediated phosphorylation of a novel substrate, N-acetylglucosamine-1-phosphate uridyltransferase, modulates its acetyltransferase activity.</title>
        <authorList>
            <person name="Parikh A."/>
            <person name="Verma S.K."/>
            <person name="Khan S."/>
            <person name="Prakash B."/>
            <person name="Nandicoori V.K."/>
        </authorList>
    </citation>
    <scope>FUNCTION AS A KINASE WITH GLMU AS SUBSTRATE</scope>
</reference>
<reference key="6">
    <citation type="journal article" date="2010" name="BMC Microbiol.">
        <title>Regulation of polar peptidoglycan biosynthesis by Wag31 phosphorylation in mycobacteria.</title>
        <authorList>
            <person name="Jani C."/>
            <person name="Eoh H."/>
            <person name="Lee J.J."/>
            <person name="Hamasha K."/>
            <person name="Sahana M.B."/>
            <person name="Han J.S."/>
            <person name="Nyayapathy S."/>
            <person name="Lee J.Y."/>
            <person name="Suh J.W."/>
            <person name="Lee S.H."/>
            <person name="Rehse S.J."/>
            <person name="Crick D.C."/>
            <person name="Kang C.M."/>
        </authorList>
    </citation>
    <scope>FUNCTION AS A KINASE WITH WAG31 AS SUBSTRATE</scope>
</reference>
<reference key="7">
    <citation type="journal article" date="2010" name="PLoS ONE">
        <title>Novel role of phosphorylation-dependent interaction between FtsZ and FipA in mycobacterial cell division.</title>
        <authorList>
            <person name="Sureka K."/>
            <person name="Hossain T."/>
            <person name="Mukherjee P."/>
            <person name="Chatterjee P."/>
            <person name="Datta P."/>
            <person name="Kundu M."/>
            <person name="Basu J."/>
        </authorList>
    </citation>
    <scope>RETRACTED PAPER</scope>
    <source>
        <strain>ATCC 25618 / H37Rv</strain>
    </source>
</reference>
<reference key="8">
    <citation type="journal article" date="2022" name="PLoS ONE">
        <authorList>
            <consortium name="PLOS ONE Editors"/>
        </authorList>
    </citation>
    <scope>RETRACTION NOTICE OF PUBMED:20066037</scope>
</reference>
<reference key="9">
    <citation type="journal article" date="2011" name="Mol. Cell. Proteomics">
        <title>Proteogenomic analysis of Mycobacterium tuberculosis by high resolution mass spectrometry.</title>
        <authorList>
            <person name="Kelkar D.S."/>
            <person name="Kumar D."/>
            <person name="Kumar P."/>
            <person name="Balakrishnan L."/>
            <person name="Muthusamy B."/>
            <person name="Yadav A.K."/>
            <person name="Shrivastava P."/>
            <person name="Marimuthu A."/>
            <person name="Anand S."/>
            <person name="Sundaram H."/>
            <person name="Kingsbury R."/>
            <person name="Harsha H.C."/>
            <person name="Nair B."/>
            <person name="Prasad T.S."/>
            <person name="Chauhan D.S."/>
            <person name="Katoch K."/>
            <person name="Katoch V.M."/>
            <person name="Kumar P."/>
            <person name="Chaerkady R."/>
            <person name="Ramachandran S."/>
            <person name="Dash D."/>
            <person name="Pandey A."/>
        </authorList>
    </citation>
    <scope>IDENTIFICATION BY MASS SPECTROMETRY [LARGE SCALE ANALYSIS]</scope>
    <source>
        <strain>ATCC 25618 / H37Rv</strain>
    </source>
</reference>
<reference key="10">
    <citation type="journal article" date="2011" name="PLoS ONE">
        <title>Phosphorylation of Mycobacterium tuberculosis Ser/Thr phosphatase by PknA and PknB.</title>
        <authorList>
            <person name="Sajid A."/>
            <person name="Arora G."/>
            <person name="Gupta M."/>
            <person name="Upadhyay S."/>
            <person name="Nandicoori V.K."/>
            <person name="Singh Y."/>
        </authorList>
    </citation>
    <scope>FUNCTION AS A KINASE WITH PSTP AS SUBSTRATE</scope>
    <source>
        <strain>ATCC 25618 / H37Rv</strain>
    </source>
</reference>
<reference key="11">
    <citation type="journal article" date="2011" name="PLoS Pathog.">
        <title>The extracytoplasmic domain of the Mycobacterium tuberculosis Ser/Thr kinase PknB binds specific muropeptides and is required for PknB localization.</title>
        <authorList>
            <person name="Mir M."/>
            <person name="Asong J."/>
            <person name="Li X."/>
            <person name="Cardot J."/>
            <person name="Boons G.J."/>
            <person name="Husson R.N."/>
        </authorList>
    </citation>
    <scope>SUBCELLULAR LOCATION</scope>
</reference>
<reference key="12">
    <citation type="journal article" date="2014" name="J. Microbiol.">
        <title>Phosphorylation regulates mycobacterial proteasome.</title>
        <authorList>
            <person name="Anandan T."/>
            <person name="Han J."/>
            <person name="Baun H."/>
            <person name="Nyayapathy S."/>
            <person name="Brown J.T."/>
            <person name="Dial R.L."/>
            <person name="Moltalvo J.A."/>
            <person name="Kim M.S."/>
            <person name="Yang S.H."/>
            <person name="Ronning D.R."/>
            <person name="Husson R.N."/>
            <person name="Suh J."/>
            <person name="Kang C.M."/>
        </authorList>
    </citation>
    <scope>FUNCTION</scope>
    <scope>IDENTIFICATION OF PRCA AND PRCB AS SUBSTRATE</scope>
    <scope>AUTOPHOSPHORYLATION</scope>
    <source>
        <strain>H37Rv</strain>
    </source>
</reference>
<reference key="13">
    <citation type="journal article" date="2015" name="J. Biol. Chem.">
        <title>Protein kinase A (PknA) of Mycobacterium tuberculosis is independently activated and is critical for growth in vitro and survival of the pathogen in the host.</title>
        <authorList>
            <person name="Nagarajan S.N."/>
            <person name="Upadhyay S."/>
            <person name="Chawla Y."/>
            <person name="Khan S."/>
            <person name="Naz S."/>
            <person name="Subramanian J."/>
            <person name="Gandotra S."/>
            <person name="Nandicoori V.K."/>
        </authorList>
    </citation>
    <scope>FUNCTION</scope>
    <scope>DOMAIN</scope>
    <scope>DISRUPTION PHENOTYPE</scope>
    <scope>MUTAGENESIS OF LYS-42; THR-172; THR-174 AND THR-180</scope>
    <scope>SUBCELLULAR LOCATION</scope>
    <source>
        <strain>H37Rv</strain>
    </source>
</reference>
<reference key="14">
    <citation type="journal article" date="2015" name="FEBS J.">
        <title>Evidence that phosphorylation of threonine in the GT motif triggers activation of PknA, a eukaryotic-type serine/threonine kinase from Mycobacterium tuberculosis.</title>
        <authorList>
            <person name="Ravala S.K."/>
            <person name="Singh S."/>
            <person name="Yadav G.S."/>
            <person name="Kumar S."/>
            <person name="Karthikeyan S."/>
            <person name="Chakraborti P.K."/>
        </authorList>
    </citation>
    <scope>X-RAY CRYSTALLOGRAPHY (2.03 ANGSTROMS) OF 1-283 IN AN INACTIVE STATE</scope>
    <scope>DOMAIN</scope>
    <scope>PHOSPHORYLATION AT THR-172; THR-174 AND THR-180</scope>
    <scope>ACTIVATION LOOP</scope>
    <scope>ACTIVITY REGULATION</scope>
    <scope>MUTAGENESIS OF 172-THR--THR-174 AND THR-180</scope>
</reference>
<reference key="15">
    <citation type="journal article" date="2015" name="Proteins">
        <title>The crystal structure of the catalytic domain of the ser/thr kinase PknA from M. tuberculosis shows an Src-like autoinhibited conformation.</title>
        <authorList>
            <person name="Wagner T."/>
            <person name="Alexandre M."/>
            <person name="Duran R."/>
            <person name="Barilone N."/>
            <person name="Wehenkel A."/>
            <person name="Alzari P.M."/>
            <person name="Bellinzoni M."/>
        </authorList>
    </citation>
    <scope>X-RAY CRYSTALLOGRAPHY (2.90 ANGSTROMS) OF 1-336 IN AN INACTIVE STATE</scope>
    <scope>PHOSPHORYLATION AT THR-8; SER-10; THR-21; SER-46; THR-64; THR-65; SER-75; THR-90; SER-105; THR-125; THR-152; THR-158; SER-198; THR-224; THR-252; SER-263; THR-302; SER-309 AND THR-313</scope>
</reference>
<evidence type="ECO:0000255" key="1"/>
<evidence type="ECO:0000255" key="2">
    <source>
        <dbReference type="PROSITE-ProRule" id="PRU00159"/>
    </source>
</evidence>
<evidence type="ECO:0000255" key="3">
    <source>
        <dbReference type="PROSITE-ProRule" id="PRU10027"/>
    </source>
</evidence>
<evidence type="ECO:0000256" key="4">
    <source>
        <dbReference type="SAM" id="MobiDB-lite"/>
    </source>
</evidence>
<evidence type="ECO:0000269" key="5">
    <source>
    </source>
</evidence>
<evidence type="ECO:0000269" key="6">
    <source>
    </source>
</evidence>
<evidence type="ECO:0000269" key="7">
    <source>
    </source>
</evidence>
<evidence type="ECO:0000269" key="8">
    <source>
    </source>
</evidence>
<evidence type="ECO:0000269" key="9">
    <source>
    </source>
</evidence>
<evidence type="ECO:0000269" key="10">
    <source>
    </source>
</evidence>
<evidence type="ECO:0000269" key="11">
    <source>
    </source>
</evidence>
<evidence type="ECO:0000269" key="12">
    <source>
    </source>
</evidence>
<evidence type="ECO:0000269" key="13">
    <source>
    </source>
</evidence>
<evidence type="ECO:0000269" key="14">
    <source>
    </source>
</evidence>
<evidence type="ECO:0000269" key="15">
    <source>
    </source>
</evidence>
<evidence type="ECO:0000305" key="16">
    <source>
    </source>
</evidence>
<evidence type="ECO:0000305" key="17">
    <source>
    </source>
</evidence>
<evidence type="ECO:0000305" key="18">
    <source>
    </source>
</evidence>
<evidence type="ECO:0007829" key="19">
    <source>
        <dbReference type="PDB" id="4OW8"/>
    </source>
</evidence>
<evidence type="ECO:0007829" key="20">
    <source>
        <dbReference type="PDB" id="4X3F"/>
    </source>
</evidence>
<evidence type="ECO:0007829" key="21">
    <source>
        <dbReference type="PDB" id="6B2Q"/>
    </source>
</evidence>
<sequence>MSPRVGVTLSGRYRLQRLIATGGMGQVWEAVDNRLGRRVAVKVLKSEFSSDPEFIERFRAEARTTAMLNHPGIASVHDYGESQMNGEGRTAYLVMELVNGEPLNSVLKRTGRLSLRHALDMLEQTGRALQIAHAAGLVHRDVKPGNILITPTGQVKITDFGIAKAVDAAPVTQTGMVMGTAQYIAPEQALGHDASPASDVYSLGVVGYEAVSGKRPFAGDGALTVAMKHIKEPPPPLPPDLPPNVRELIEITLVKNPAMRYRSGGPFADAVAAVRAGRRPPRPSQTPPPGRAAPAAIPSGTTARVAANSAGRTAASRRSRPATGGHRPPRRTFSSGQRALLWAAGVLGALAIIIAVLLVIKAPGDNSPQQAPTPTVTTTGNPPASNTGGTDASPRLNWTERGETRHSGLQSWVVPPTPHSRASLARYEIAQ</sequence>
<proteinExistence type="evidence at protein level"/>
<dbReference type="EC" id="2.7.11.1"/>
<dbReference type="EMBL" id="AL123456">
    <property type="protein sequence ID" value="CCP42737.1"/>
    <property type="molecule type" value="Genomic_DNA"/>
</dbReference>
<dbReference type="PIR" id="E70699">
    <property type="entry name" value="E70699"/>
</dbReference>
<dbReference type="RefSeq" id="NP_214529.1">
    <property type="nucleotide sequence ID" value="NC_000962.3"/>
</dbReference>
<dbReference type="RefSeq" id="WP_003400358.1">
    <property type="nucleotide sequence ID" value="NZ_KK339370.1"/>
</dbReference>
<dbReference type="PDB" id="4OW8">
    <property type="method" value="X-ray"/>
    <property type="resolution" value="2.03 A"/>
    <property type="chains" value="A=1-283"/>
</dbReference>
<dbReference type="PDB" id="4X3F">
    <property type="method" value="X-ray"/>
    <property type="resolution" value="2.90 A"/>
    <property type="chains" value="A/B/C=1-336"/>
</dbReference>
<dbReference type="PDB" id="6B2Q">
    <property type="method" value="X-ray"/>
    <property type="resolution" value="2.88 A"/>
    <property type="chains" value="A/B/C/D=1-296"/>
</dbReference>
<dbReference type="PDBsum" id="4OW8"/>
<dbReference type="PDBsum" id="4X3F"/>
<dbReference type="PDBsum" id="6B2Q"/>
<dbReference type="SMR" id="P9WI83"/>
<dbReference type="FunCoup" id="P9WI83">
    <property type="interactions" value="98"/>
</dbReference>
<dbReference type="IntAct" id="P9WI83">
    <property type="interactions" value="2"/>
</dbReference>
<dbReference type="STRING" id="83332.Rv0015c"/>
<dbReference type="BindingDB" id="P9WI83"/>
<dbReference type="ChEMBL" id="CHEMBL4295585"/>
<dbReference type="iPTMnet" id="P9WI83"/>
<dbReference type="PaxDb" id="83332-Rv0015c"/>
<dbReference type="DNASU" id="885953"/>
<dbReference type="GeneID" id="45423974"/>
<dbReference type="GeneID" id="885953"/>
<dbReference type="KEGG" id="mtu:Rv0015c"/>
<dbReference type="KEGG" id="mtv:RVBD_0015c"/>
<dbReference type="TubercuList" id="Rv0015c"/>
<dbReference type="eggNOG" id="COG0515">
    <property type="taxonomic scope" value="Bacteria"/>
</dbReference>
<dbReference type="InParanoid" id="P9WI83"/>
<dbReference type="OrthoDB" id="9762169at2"/>
<dbReference type="PhylomeDB" id="P9WI83"/>
<dbReference type="BRENDA" id="2.7.11.1">
    <property type="organism ID" value="3445"/>
</dbReference>
<dbReference type="EvolutionaryTrace" id="P9WI83"/>
<dbReference type="Proteomes" id="UP000001584">
    <property type="component" value="Chromosome"/>
</dbReference>
<dbReference type="GO" id="GO:0005829">
    <property type="term" value="C:cytosol"/>
    <property type="evidence" value="ECO:0007005"/>
    <property type="project" value="MTBBASE"/>
</dbReference>
<dbReference type="GO" id="GO:0005576">
    <property type="term" value="C:extracellular region"/>
    <property type="evidence" value="ECO:0007005"/>
    <property type="project" value="MTBBASE"/>
</dbReference>
<dbReference type="GO" id="GO:0005886">
    <property type="term" value="C:plasma membrane"/>
    <property type="evidence" value="ECO:0000314"/>
    <property type="project" value="MTBBASE"/>
</dbReference>
<dbReference type="GO" id="GO:0005524">
    <property type="term" value="F:ATP binding"/>
    <property type="evidence" value="ECO:0007669"/>
    <property type="project" value="UniProtKB-KW"/>
</dbReference>
<dbReference type="GO" id="GO:0106310">
    <property type="term" value="F:protein serine kinase activity"/>
    <property type="evidence" value="ECO:0007669"/>
    <property type="project" value="RHEA"/>
</dbReference>
<dbReference type="GO" id="GO:0004674">
    <property type="term" value="F:protein serine/threonine kinase activity"/>
    <property type="evidence" value="ECO:0000314"/>
    <property type="project" value="UniProtKB"/>
</dbReference>
<dbReference type="GO" id="GO:0045717">
    <property type="term" value="P:negative regulation of fatty acid biosynthetic process"/>
    <property type="evidence" value="ECO:0000314"/>
    <property type="project" value="MTBBASE"/>
</dbReference>
<dbReference type="GO" id="GO:0051055">
    <property type="term" value="P:negative regulation of lipid biosynthetic process"/>
    <property type="evidence" value="ECO:0000314"/>
    <property type="project" value="MTBBASE"/>
</dbReference>
<dbReference type="GO" id="GO:1990443">
    <property type="term" value="P:peptidyl-threonine autophosphorylation"/>
    <property type="evidence" value="ECO:0000315"/>
    <property type="project" value="CACAO"/>
</dbReference>
<dbReference type="GO" id="GO:0008360">
    <property type="term" value="P:regulation of cell shape"/>
    <property type="evidence" value="ECO:0000314"/>
    <property type="project" value="MTBBASE"/>
</dbReference>
<dbReference type="GO" id="GO:0006355">
    <property type="term" value="P:regulation of DNA-templated transcription"/>
    <property type="evidence" value="ECO:0000314"/>
    <property type="project" value="UniProtKB"/>
</dbReference>
<dbReference type="GO" id="GO:0019217">
    <property type="term" value="P:regulation of fatty acid metabolic process"/>
    <property type="evidence" value="ECO:0000314"/>
    <property type="project" value="UniProtKB"/>
</dbReference>
<dbReference type="CDD" id="cd14014">
    <property type="entry name" value="STKc_PknB_like"/>
    <property type="match status" value="1"/>
</dbReference>
<dbReference type="FunFam" id="1.10.510.10:FF:000021">
    <property type="entry name" value="Serine/threonine protein kinase"/>
    <property type="match status" value="1"/>
</dbReference>
<dbReference type="FunFam" id="3.30.200.20:FF:000035">
    <property type="entry name" value="Serine/threonine protein kinase Stk1"/>
    <property type="match status" value="1"/>
</dbReference>
<dbReference type="Gene3D" id="3.30.200.20">
    <property type="entry name" value="Phosphorylase Kinase, domain 1"/>
    <property type="match status" value="1"/>
</dbReference>
<dbReference type="Gene3D" id="1.10.510.10">
    <property type="entry name" value="Transferase(Phosphotransferase) domain 1"/>
    <property type="match status" value="1"/>
</dbReference>
<dbReference type="InterPro" id="IPR011009">
    <property type="entry name" value="Kinase-like_dom_sf"/>
</dbReference>
<dbReference type="InterPro" id="IPR000719">
    <property type="entry name" value="Prot_kinase_dom"/>
</dbReference>
<dbReference type="InterPro" id="IPR008271">
    <property type="entry name" value="Ser/Thr_kinase_AS"/>
</dbReference>
<dbReference type="PANTHER" id="PTHR43289">
    <property type="entry name" value="MITOGEN-ACTIVATED PROTEIN KINASE KINASE KINASE 20-RELATED"/>
    <property type="match status" value="1"/>
</dbReference>
<dbReference type="PANTHER" id="PTHR43289:SF6">
    <property type="entry name" value="SERINE_THREONINE-PROTEIN KINASE NEKL-3"/>
    <property type="match status" value="1"/>
</dbReference>
<dbReference type="Pfam" id="PF00069">
    <property type="entry name" value="Pkinase"/>
    <property type="match status" value="1"/>
</dbReference>
<dbReference type="SMART" id="SM00220">
    <property type="entry name" value="S_TKc"/>
    <property type="match status" value="1"/>
</dbReference>
<dbReference type="SUPFAM" id="SSF56112">
    <property type="entry name" value="Protein kinase-like (PK-like)"/>
    <property type="match status" value="1"/>
</dbReference>
<dbReference type="PROSITE" id="PS50011">
    <property type="entry name" value="PROTEIN_KINASE_DOM"/>
    <property type="match status" value="1"/>
</dbReference>
<dbReference type="PROSITE" id="PS00108">
    <property type="entry name" value="PROTEIN_KINASE_ST"/>
    <property type="match status" value="1"/>
</dbReference>
<accession>P9WI83</accession>
<accession>L0T594</accession>
<accession>P65726</accession>
<accession>P71585</accession>
<protein>
    <recommendedName>
        <fullName>Serine/threonine-protein kinase PknA</fullName>
        <ecNumber>2.7.11.1</ecNumber>
    </recommendedName>
</protein>
<feature type="chain" id="PRO_0000171205" description="Serine/threonine-protein kinase PknA">
    <location>
        <begin position="1"/>
        <end position="431"/>
    </location>
</feature>
<feature type="topological domain" description="Cytoplasmic" evidence="1">
    <location>
        <begin position="1"/>
        <end position="339"/>
    </location>
</feature>
<feature type="transmembrane region" description="Helical" evidence="1">
    <location>
        <begin position="340"/>
        <end position="360"/>
    </location>
</feature>
<feature type="topological domain" description="Extracellular" evidence="1">
    <location>
        <begin position="361"/>
        <end position="431"/>
    </location>
</feature>
<feature type="domain" description="Protein kinase" evidence="2">
    <location>
        <begin position="13"/>
        <end position="272"/>
    </location>
</feature>
<feature type="region of interest" description="Activation loop" evidence="17">
    <location>
        <begin position="162"/>
        <end position="184"/>
    </location>
</feature>
<feature type="region of interest" description="Disordered" evidence="4">
    <location>
        <begin position="276"/>
        <end position="333"/>
    </location>
</feature>
<feature type="region of interest" description="Disordered" evidence="4">
    <location>
        <begin position="366"/>
        <end position="418"/>
    </location>
</feature>
<feature type="compositionally biased region" description="Pro residues" evidence="4">
    <location>
        <begin position="282"/>
        <end position="291"/>
    </location>
</feature>
<feature type="compositionally biased region" description="Low complexity" evidence="4">
    <location>
        <begin position="292"/>
        <end position="314"/>
    </location>
</feature>
<feature type="compositionally biased region" description="Low complexity" evidence="4">
    <location>
        <begin position="368"/>
        <end position="384"/>
    </location>
</feature>
<feature type="active site" description="Proton acceptor" evidence="2 3">
    <location>
        <position position="141"/>
    </location>
</feature>
<feature type="binding site" evidence="2">
    <location>
        <begin position="19"/>
        <end position="27"/>
    </location>
    <ligand>
        <name>ATP</name>
        <dbReference type="ChEBI" id="CHEBI:30616"/>
    </ligand>
</feature>
<feature type="binding site" evidence="2">
    <location>
        <position position="42"/>
    </location>
    <ligand>
        <name>ATP</name>
        <dbReference type="ChEBI" id="CHEBI:30616"/>
    </ligand>
</feature>
<feature type="modified residue" description="Phosphothreonine; by autocatalysis" evidence="13">
    <location>
        <position position="8"/>
    </location>
</feature>
<feature type="modified residue" description="Phosphoserine; by autocatalysis" evidence="13">
    <location>
        <position position="10"/>
    </location>
</feature>
<feature type="modified residue" description="Phosphothreonine; by autocatalysis" evidence="13">
    <location>
        <position position="21"/>
    </location>
</feature>
<feature type="modified residue" description="Phosphoserine; by autocatalysis" evidence="13">
    <location>
        <position position="46"/>
    </location>
</feature>
<feature type="modified residue" description="Phosphothreonine; by autocatalysis" evidence="13">
    <location>
        <position position="64"/>
    </location>
</feature>
<feature type="modified residue" description="Phosphothreonine; by autocatalysis" evidence="13">
    <location>
        <position position="65"/>
    </location>
</feature>
<feature type="modified residue" description="Phosphoserine; by autocatalysis" evidence="13">
    <location>
        <position position="75"/>
    </location>
</feature>
<feature type="modified residue" description="Phosphothreonine; by autocatalysis" evidence="13">
    <location>
        <position position="90"/>
    </location>
</feature>
<feature type="modified residue" description="Phosphoserine; by autocatalysis" evidence="13">
    <location>
        <position position="105"/>
    </location>
</feature>
<feature type="modified residue" description="Phosphothreonine; by autocatalysis" evidence="13">
    <location>
        <position position="125"/>
    </location>
</feature>
<feature type="modified residue" description="Phosphothreonine; by autocatalysis" evidence="13">
    <location>
        <position position="152"/>
    </location>
</feature>
<feature type="modified residue" description="Phosphothreonine; by autocatalysis" evidence="13">
    <location>
        <position position="158"/>
    </location>
</feature>
<feature type="modified residue" description="Phosphothreonine; by autocatalysis" evidence="14">
    <location>
        <position position="172"/>
    </location>
</feature>
<feature type="modified residue" description="Phosphothreonine; by autocatalysis" evidence="14">
    <location>
        <position position="174"/>
    </location>
</feature>
<feature type="modified residue" description="Phosphothreonine; by autocatalysis" evidence="14">
    <location>
        <position position="180"/>
    </location>
</feature>
<feature type="modified residue" description="Phosphoserine; by autocatalysis" evidence="13">
    <location>
        <position position="198"/>
    </location>
</feature>
<feature type="modified residue" description="Phosphothreonine; by autocatalysis" evidence="13">
    <location>
        <position position="224"/>
    </location>
</feature>
<feature type="modified residue" description="Phosphothreonine; by autocatalysis" evidence="13">
    <location>
        <position position="252"/>
    </location>
</feature>
<feature type="modified residue" description="Phosphoserine; by autocatalysis" evidence="13">
    <location>
        <position position="263"/>
    </location>
</feature>
<feature type="modified residue" description="Phosphothreonine; by autocatalysis" evidence="13">
    <location>
        <position position="302"/>
    </location>
</feature>
<feature type="modified residue" description="Phosphoserine; by autocatalysis" evidence="13">
    <location>
        <position position="309"/>
    </location>
</feature>
<feature type="modified residue" description="Phosphothreonine; by autocatalysis" evidence="13">
    <location>
        <position position="313"/>
    </location>
</feature>
<feature type="mutagenesis site" description="Loss of autophosphorylation activity. This mutation results in cell death." evidence="5 15">
    <original>K</original>
    <variation>M</variation>
    <location>
        <position position="42"/>
    </location>
</feature>
<feature type="mutagenesis site" description="10-fold reduction in transphosphorylation activity. This mutant strain shows severely compromised growth. Loss of autophosphorylation activity and weak transphosphorylation activity; when associated with A-174." evidence="14 15">
    <original>T</original>
    <variation>A</variation>
    <location>
        <position position="172"/>
    </location>
</feature>
<feature type="mutagenesis site" description="5-fold reduction in transphosphorylation activity. Loss of autophosphorylation activity and weak transphosphorylation activity; when associated with A-172." evidence="14 15">
    <original>T</original>
    <variation>A</variation>
    <location>
        <position position="174"/>
    </location>
</feature>
<feature type="mutagenesis site" description="Loss of auto- and transphosphorylation activity." evidence="14 15">
    <original>T</original>
    <variation>A</variation>
    <location>
        <position position="180"/>
    </location>
</feature>
<feature type="mutagenesis site" description="Loss of transphosphorylation activity." evidence="15">
    <original>T</original>
    <variation>E</variation>
    <location>
        <position position="180"/>
    </location>
</feature>
<feature type="mutagenesis site" description="4-fold reduction in transphosphorylation activity." evidence="15">
    <original>T</original>
    <variation>S</variation>
    <location>
        <position position="180"/>
    </location>
</feature>
<feature type="turn" evidence="19">
    <location>
        <begin position="10"/>
        <end position="12"/>
    </location>
</feature>
<feature type="strand" evidence="19">
    <location>
        <begin position="13"/>
        <end position="20"/>
    </location>
</feature>
<feature type="strand" evidence="19">
    <location>
        <begin position="23"/>
        <end position="32"/>
    </location>
</feature>
<feature type="turn" evidence="19">
    <location>
        <begin position="33"/>
        <end position="36"/>
    </location>
</feature>
<feature type="strand" evidence="19">
    <location>
        <begin position="37"/>
        <end position="44"/>
    </location>
</feature>
<feature type="helix" evidence="19">
    <location>
        <begin position="46"/>
        <end position="49"/>
    </location>
</feature>
<feature type="helix" evidence="19">
    <location>
        <begin position="52"/>
        <end position="65"/>
    </location>
</feature>
<feature type="strand" evidence="19">
    <location>
        <begin position="76"/>
        <end position="82"/>
    </location>
</feature>
<feature type="turn" evidence="20">
    <location>
        <begin position="85"/>
        <end position="87"/>
    </location>
</feature>
<feature type="strand" evidence="19">
    <location>
        <begin position="90"/>
        <end position="95"/>
    </location>
</feature>
<feature type="strand" evidence="19">
    <location>
        <begin position="100"/>
        <end position="102"/>
    </location>
</feature>
<feature type="helix" evidence="19">
    <location>
        <begin position="103"/>
        <end position="110"/>
    </location>
</feature>
<feature type="helix" evidence="19">
    <location>
        <begin position="115"/>
        <end position="134"/>
    </location>
</feature>
<feature type="helix" evidence="19">
    <location>
        <begin position="144"/>
        <end position="146"/>
    </location>
</feature>
<feature type="strand" evidence="19">
    <location>
        <begin position="147"/>
        <end position="149"/>
    </location>
</feature>
<feature type="strand" evidence="19">
    <location>
        <begin position="155"/>
        <end position="157"/>
    </location>
</feature>
<feature type="helix" evidence="19">
    <location>
        <begin position="163"/>
        <end position="165"/>
    </location>
</feature>
<feature type="helix" evidence="19">
    <location>
        <begin position="171"/>
        <end position="174"/>
    </location>
</feature>
<feature type="turn" evidence="21">
    <location>
        <begin position="181"/>
        <end position="183"/>
    </location>
</feature>
<feature type="helix" evidence="19">
    <location>
        <begin position="186"/>
        <end position="189"/>
    </location>
</feature>
<feature type="helix" evidence="19">
    <location>
        <begin position="196"/>
        <end position="212"/>
    </location>
</feature>
<feature type="helix" evidence="19">
    <location>
        <begin position="222"/>
        <end position="231"/>
    </location>
</feature>
<feature type="helix" evidence="19">
    <location>
        <begin position="243"/>
        <end position="252"/>
    </location>
</feature>
<feature type="helix" evidence="19">
    <location>
        <begin position="257"/>
        <end position="259"/>
    </location>
</feature>
<feature type="helix" evidence="19">
    <location>
        <begin position="264"/>
        <end position="275"/>
    </location>
</feature>